<accession>P41273</accession>
<accession>Q2M3S2</accession>
<keyword id="KW-0002">3D-structure</keyword>
<keyword id="KW-0202">Cytokine</keyword>
<keyword id="KW-0472">Membrane</keyword>
<keyword id="KW-1267">Proteomics identification</keyword>
<keyword id="KW-1185">Reference proteome</keyword>
<keyword id="KW-0735">Signal-anchor</keyword>
<keyword id="KW-0812">Transmembrane</keyword>
<keyword id="KW-1133">Transmembrane helix</keyword>
<comment type="function">
    <text evidence="3">Cytokine that binds to TNFRSF9. Induces the proliferation of activated peripheral blood T-cells. May have a role in activation-induced cell death (AICD). May play a role in cognate interactions between T-cells and B-cells/macrophages.</text>
</comment>
<comment type="subunit">
    <text evidence="3">Homotrimer.</text>
</comment>
<comment type="interaction">
    <interactant intactId="EBI-21507346">
        <id>P41273</id>
    </interactant>
    <interactant intactId="EBI-28951773">
        <id>Q99969</id>
        <label>RARRES2</label>
    </interactant>
    <organismsDiffer>false</organismsDiffer>
    <experiments>2</experiments>
</comment>
<comment type="subcellular location">
    <subcellularLocation>
        <location>Membrane</location>
        <topology>Single-pass type II membrane protein</topology>
    </subcellularLocation>
</comment>
<comment type="tissue specificity">
    <text>Expressed in brain, placenta, lung, skeletal muscle and kidney.</text>
</comment>
<comment type="similarity">
    <text evidence="4">Belongs to the tumor necrosis factor family.</text>
</comment>
<evidence type="ECO:0000255" key="1"/>
<evidence type="ECO:0000255" key="2">
    <source>
        <dbReference type="PROSITE-ProRule" id="PRU01387"/>
    </source>
</evidence>
<evidence type="ECO:0000269" key="3">
    <source>
    </source>
</evidence>
<evidence type="ECO:0000305" key="4"/>
<evidence type="ECO:0007829" key="5">
    <source>
        <dbReference type="PDB" id="2X29"/>
    </source>
</evidence>
<evidence type="ECO:0007829" key="6">
    <source>
        <dbReference type="PDB" id="6CPR"/>
    </source>
</evidence>
<evidence type="ECO:0007829" key="7">
    <source>
        <dbReference type="PDB" id="6D3N"/>
    </source>
</evidence>
<evidence type="ECO:0007829" key="8">
    <source>
        <dbReference type="PDB" id="6FIB"/>
    </source>
</evidence>
<evidence type="ECO:0007829" key="9">
    <source>
        <dbReference type="PDB" id="6MGP"/>
    </source>
</evidence>
<name>TNFL9_HUMAN</name>
<protein>
    <recommendedName>
        <fullName>Tumor necrosis factor ligand superfamily member 9</fullName>
    </recommendedName>
    <alternativeName>
        <fullName>4-1BB ligand</fullName>
        <shortName>4-1BBL</shortName>
    </alternativeName>
</protein>
<dbReference type="EMBL" id="U03398">
    <property type="protein sequence ID" value="AAA53134.1"/>
    <property type="molecule type" value="mRNA"/>
</dbReference>
<dbReference type="EMBL" id="BC104805">
    <property type="protein sequence ID" value="AAI04806.1"/>
    <property type="molecule type" value="mRNA"/>
</dbReference>
<dbReference type="EMBL" id="BC104807">
    <property type="protein sequence ID" value="AAI04808.1"/>
    <property type="molecule type" value="mRNA"/>
</dbReference>
<dbReference type="CCDS" id="CCDS12169.1"/>
<dbReference type="PIR" id="I38427">
    <property type="entry name" value="I38427"/>
</dbReference>
<dbReference type="RefSeq" id="NP_003802.1">
    <property type="nucleotide sequence ID" value="NM_003811.4"/>
</dbReference>
<dbReference type="PDB" id="2X29">
    <property type="method" value="X-ray"/>
    <property type="resolution" value="2.30 A"/>
    <property type="chains" value="A=80-246"/>
</dbReference>
<dbReference type="PDB" id="6A3V">
    <property type="method" value="X-ray"/>
    <property type="resolution" value="3.39 A"/>
    <property type="chains" value="A/C/E/G/I/K/M/O/Q/S/U/W=58-254"/>
</dbReference>
<dbReference type="PDB" id="6BWV">
    <property type="method" value="X-ray"/>
    <property type="resolution" value="2.40 A"/>
    <property type="chains" value="A/B=89-242"/>
</dbReference>
<dbReference type="PDB" id="6CPR">
    <property type="method" value="X-ray"/>
    <property type="resolution" value="2.70 A"/>
    <property type="chains" value="A/B/C=80-244"/>
</dbReference>
<dbReference type="PDB" id="6CU0">
    <property type="method" value="X-ray"/>
    <property type="resolution" value="3.20 A"/>
    <property type="chains" value="A/B/C/D/E/F=80-244"/>
</dbReference>
<dbReference type="PDB" id="6D3N">
    <property type="method" value="X-ray"/>
    <property type="resolution" value="2.70 A"/>
    <property type="chains" value="A=80-244"/>
</dbReference>
<dbReference type="PDB" id="6FIB">
    <property type="method" value="X-ray"/>
    <property type="resolution" value="2.70 A"/>
    <property type="chains" value="A/B/C=71-248"/>
</dbReference>
<dbReference type="PDB" id="6MGE">
    <property type="method" value="X-ray"/>
    <property type="resolution" value="2.95 A"/>
    <property type="chains" value="A/B/C=58-254"/>
</dbReference>
<dbReference type="PDB" id="6MGP">
    <property type="method" value="X-ray"/>
    <property type="resolution" value="2.13 A"/>
    <property type="chains" value="A/B/C=58-254"/>
</dbReference>
<dbReference type="PDBsum" id="2X29"/>
<dbReference type="PDBsum" id="6A3V"/>
<dbReference type="PDBsum" id="6BWV"/>
<dbReference type="PDBsum" id="6CPR"/>
<dbReference type="PDBsum" id="6CU0"/>
<dbReference type="PDBsum" id="6D3N"/>
<dbReference type="PDBsum" id="6FIB"/>
<dbReference type="PDBsum" id="6MGE"/>
<dbReference type="PDBsum" id="6MGP"/>
<dbReference type="SMR" id="P41273"/>
<dbReference type="BioGRID" id="114281">
    <property type="interactions" value="146"/>
</dbReference>
<dbReference type="DIP" id="DIP-3020N"/>
<dbReference type="FunCoup" id="P41273">
    <property type="interactions" value="548"/>
</dbReference>
<dbReference type="IntAct" id="P41273">
    <property type="interactions" value="83"/>
</dbReference>
<dbReference type="STRING" id="9606.ENSP00000245817"/>
<dbReference type="iPTMnet" id="P41273"/>
<dbReference type="PhosphoSitePlus" id="P41273"/>
<dbReference type="SwissPalm" id="P41273"/>
<dbReference type="BioMuta" id="TNFSF9"/>
<dbReference type="DMDM" id="728739"/>
<dbReference type="CPTAC" id="CPTAC-5963"/>
<dbReference type="jPOST" id="P41273"/>
<dbReference type="MassIVE" id="P41273"/>
<dbReference type="PaxDb" id="9606-ENSP00000245817"/>
<dbReference type="PeptideAtlas" id="P41273"/>
<dbReference type="ProteomicsDB" id="55457"/>
<dbReference type="Pumba" id="P41273"/>
<dbReference type="Antibodypedia" id="24211">
    <property type="antibodies" value="699 antibodies from 41 providers"/>
</dbReference>
<dbReference type="CPTC" id="P41273">
    <property type="antibodies" value="2 antibodies"/>
</dbReference>
<dbReference type="DNASU" id="8744"/>
<dbReference type="Ensembl" id="ENST00000245817.5">
    <property type="protein sequence ID" value="ENSP00000245817.2"/>
    <property type="gene ID" value="ENSG00000125657.5"/>
</dbReference>
<dbReference type="GeneID" id="8744"/>
<dbReference type="KEGG" id="hsa:8744"/>
<dbReference type="MANE-Select" id="ENST00000245817.5">
    <property type="protein sequence ID" value="ENSP00000245817.2"/>
    <property type="RefSeq nucleotide sequence ID" value="NM_003811.4"/>
    <property type="RefSeq protein sequence ID" value="NP_003802.1"/>
</dbReference>
<dbReference type="UCSC" id="uc002mfh.2">
    <property type="organism name" value="human"/>
</dbReference>
<dbReference type="AGR" id="HGNC:11939"/>
<dbReference type="CTD" id="8744"/>
<dbReference type="DisGeNET" id="8744"/>
<dbReference type="GeneCards" id="TNFSF9"/>
<dbReference type="HGNC" id="HGNC:11939">
    <property type="gene designation" value="TNFSF9"/>
</dbReference>
<dbReference type="HPA" id="ENSG00000125657">
    <property type="expression patterns" value="Tissue enhanced (cervix, esophagus, vagina)"/>
</dbReference>
<dbReference type="MIM" id="606182">
    <property type="type" value="gene"/>
</dbReference>
<dbReference type="neXtProt" id="NX_P41273"/>
<dbReference type="OpenTargets" id="ENSG00000125657"/>
<dbReference type="PharmGKB" id="PA36629"/>
<dbReference type="VEuPathDB" id="HostDB:ENSG00000125657"/>
<dbReference type="eggNOG" id="ENOG502SSK0">
    <property type="taxonomic scope" value="Eukaryota"/>
</dbReference>
<dbReference type="GeneTree" id="ENSGT00390000006244"/>
<dbReference type="HOGENOM" id="CLU_095541_0_0_1"/>
<dbReference type="InParanoid" id="P41273"/>
<dbReference type="OMA" id="GPLRWYS"/>
<dbReference type="OrthoDB" id="9450706at2759"/>
<dbReference type="PAN-GO" id="P41273">
    <property type="GO annotations" value="4 GO annotations based on evolutionary models"/>
</dbReference>
<dbReference type="PhylomeDB" id="P41273"/>
<dbReference type="TreeFam" id="TF338523"/>
<dbReference type="PathwayCommons" id="P41273"/>
<dbReference type="Reactome" id="R-HSA-5669034">
    <property type="pathway name" value="TNFs bind their physiological receptors"/>
</dbReference>
<dbReference type="SignaLink" id="P41273"/>
<dbReference type="BioGRID-ORCS" id="8744">
    <property type="hits" value="12 hits in 1160 CRISPR screens"/>
</dbReference>
<dbReference type="ChiTaRS" id="TNFSF9">
    <property type="organism name" value="human"/>
</dbReference>
<dbReference type="EvolutionaryTrace" id="P41273"/>
<dbReference type="GenomeRNAi" id="8744"/>
<dbReference type="Pharos" id="P41273">
    <property type="development level" value="Tbio"/>
</dbReference>
<dbReference type="PRO" id="PR:P41273"/>
<dbReference type="Proteomes" id="UP000005640">
    <property type="component" value="Chromosome 19"/>
</dbReference>
<dbReference type="RNAct" id="P41273">
    <property type="molecule type" value="protein"/>
</dbReference>
<dbReference type="Bgee" id="ENSG00000125657">
    <property type="expression patterns" value="Expressed in buccal mucosa cell and 113 other cell types or tissues"/>
</dbReference>
<dbReference type="ExpressionAtlas" id="P41273">
    <property type="expression patterns" value="baseline and differential"/>
</dbReference>
<dbReference type="GO" id="GO:0005615">
    <property type="term" value="C:extracellular space"/>
    <property type="evidence" value="ECO:0007669"/>
    <property type="project" value="UniProtKB-KW"/>
</dbReference>
<dbReference type="GO" id="GO:0005886">
    <property type="term" value="C:plasma membrane"/>
    <property type="evidence" value="ECO:0000318"/>
    <property type="project" value="GO_Central"/>
</dbReference>
<dbReference type="GO" id="GO:0005125">
    <property type="term" value="F:cytokine activity"/>
    <property type="evidence" value="ECO:0007669"/>
    <property type="project" value="UniProtKB-KW"/>
</dbReference>
<dbReference type="GO" id="GO:0005102">
    <property type="term" value="F:signaling receptor binding"/>
    <property type="evidence" value="ECO:0000304"/>
    <property type="project" value="ProtInc"/>
</dbReference>
<dbReference type="GO" id="GO:0005164">
    <property type="term" value="F:tumor necrosis factor receptor binding"/>
    <property type="evidence" value="ECO:0007669"/>
    <property type="project" value="InterPro"/>
</dbReference>
<dbReference type="GO" id="GO:0032813">
    <property type="term" value="F:tumor necrosis factor receptor superfamily binding"/>
    <property type="evidence" value="ECO:0000318"/>
    <property type="project" value="GO_Central"/>
</dbReference>
<dbReference type="GO" id="GO:0007267">
    <property type="term" value="P:cell-cell signaling"/>
    <property type="evidence" value="ECO:0000304"/>
    <property type="project" value="ProtInc"/>
</dbReference>
<dbReference type="GO" id="GO:0006955">
    <property type="term" value="P:immune response"/>
    <property type="evidence" value="ECO:0007669"/>
    <property type="project" value="InterPro"/>
</dbReference>
<dbReference type="GO" id="GO:0042104">
    <property type="term" value="P:positive regulation of activated T cell proliferation"/>
    <property type="evidence" value="ECO:0000318"/>
    <property type="project" value="GO_Central"/>
</dbReference>
<dbReference type="GO" id="GO:0045585">
    <property type="term" value="P:positive regulation of cytotoxic T cell differentiation"/>
    <property type="evidence" value="ECO:0000318"/>
    <property type="project" value="GO_Central"/>
</dbReference>
<dbReference type="GO" id="GO:0042981">
    <property type="term" value="P:regulation of apoptotic process"/>
    <property type="evidence" value="ECO:0000304"/>
    <property type="project" value="GO_Central"/>
</dbReference>
<dbReference type="GO" id="GO:0042129">
    <property type="term" value="P:regulation of T cell proliferation"/>
    <property type="evidence" value="ECO:0000304"/>
    <property type="project" value="GO_Central"/>
</dbReference>
<dbReference type="CDD" id="cd00184">
    <property type="entry name" value="TNF"/>
    <property type="match status" value="1"/>
</dbReference>
<dbReference type="FunFam" id="2.60.120.40:FF:000032">
    <property type="entry name" value="Tumor necrosis factor ligand superfamily member 9"/>
    <property type="match status" value="1"/>
</dbReference>
<dbReference type="Gene3D" id="2.60.120.40">
    <property type="match status" value="1"/>
</dbReference>
<dbReference type="InterPro" id="IPR021184">
    <property type="entry name" value="TNF_CS"/>
</dbReference>
<dbReference type="InterPro" id="IPR006052">
    <property type="entry name" value="TNF_dom"/>
</dbReference>
<dbReference type="InterPro" id="IPR042373">
    <property type="entry name" value="TNFSF9"/>
</dbReference>
<dbReference type="InterPro" id="IPR008983">
    <property type="entry name" value="Tumour_necrosis_fac-like_dom"/>
</dbReference>
<dbReference type="PANTHER" id="PTHR15153">
    <property type="entry name" value="TUMOR NECROSIS FACTOR LIGAND SUPERFAMILY MEMBER 9"/>
    <property type="match status" value="1"/>
</dbReference>
<dbReference type="PANTHER" id="PTHR15153:SF0">
    <property type="entry name" value="TUMOR NECROSIS FACTOR LIGAND SUPERFAMILY MEMBER 9"/>
    <property type="match status" value="1"/>
</dbReference>
<dbReference type="Pfam" id="PF00229">
    <property type="entry name" value="TNF"/>
    <property type="match status" value="1"/>
</dbReference>
<dbReference type="SMART" id="SM00207">
    <property type="entry name" value="TNF"/>
    <property type="match status" value="1"/>
</dbReference>
<dbReference type="SUPFAM" id="SSF49842">
    <property type="entry name" value="TNF-like"/>
    <property type="match status" value="1"/>
</dbReference>
<dbReference type="PROSITE" id="PS00251">
    <property type="entry name" value="THD_1"/>
    <property type="match status" value="1"/>
</dbReference>
<dbReference type="PROSITE" id="PS50049">
    <property type="entry name" value="THD_2"/>
    <property type="match status" value="1"/>
</dbReference>
<proteinExistence type="evidence at protein level"/>
<feature type="chain" id="PRO_0000185501" description="Tumor necrosis factor ligand superfamily member 9">
    <location>
        <begin position="1"/>
        <end position="254"/>
    </location>
</feature>
<feature type="topological domain" description="Cytoplasmic" evidence="1">
    <location>
        <begin position="1"/>
        <end position="28"/>
    </location>
</feature>
<feature type="transmembrane region" description="Helical; Signal-anchor for type II membrane protein" evidence="1">
    <location>
        <begin position="29"/>
        <end position="49"/>
    </location>
</feature>
<feature type="topological domain" description="Extracellular" evidence="1">
    <location>
        <begin position="50"/>
        <end position="254"/>
    </location>
</feature>
<feature type="domain" description="THD" evidence="2">
    <location>
        <begin position="91"/>
        <end position="240"/>
    </location>
</feature>
<feature type="sequence variant" id="VAR_011928" description="In dbSNP:rs442511.">
    <original>P</original>
    <variation>A</variation>
    <location>
        <position position="17"/>
    </location>
</feature>
<feature type="strand" evidence="5">
    <location>
        <begin position="83"/>
        <end position="85"/>
    </location>
</feature>
<feature type="strand" evidence="9">
    <location>
        <begin position="92"/>
        <end position="97"/>
    </location>
</feature>
<feature type="strand" evidence="9">
    <location>
        <begin position="104"/>
        <end position="106"/>
    </location>
</feature>
<feature type="strand" evidence="7">
    <location>
        <begin position="109"/>
        <end position="111"/>
    </location>
</feature>
<feature type="strand" evidence="5">
    <location>
        <begin position="115"/>
        <end position="117"/>
    </location>
</feature>
<feature type="strand" evidence="5">
    <location>
        <begin position="121"/>
        <end position="123"/>
    </location>
</feature>
<feature type="strand" evidence="9">
    <location>
        <begin position="124"/>
        <end position="127"/>
    </location>
</feature>
<feature type="turn" evidence="9">
    <location>
        <begin position="128"/>
        <end position="131"/>
    </location>
</feature>
<feature type="strand" evidence="9">
    <location>
        <begin position="132"/>
        <end position="135"/>
    </location>
</feature>
<feature type="strand" evidence="9">
    <location>
        <begin position="139"/>
        <end position="151"/>
    </location>
</feature>
<feature type="strand" evidence="9">
    <location>
        <begin position="158"/>
        <end position="169"/>
    </location>
</feature>
<feature type="strand" evidence="6">
    <location>
        <begin position="171"/>
        <end position="175"/>
    </location>
</feature>
<feature type="strand" evidence="9">
    <location>
        <begin position="178"/>
        <end position="185"/>
    </location>
</feature>
<feature type="strand" evidence="8">
    <location>
        <begin position="189"/>
        <end position="191"/>
    </location>
</feature>
<feature type="strand" evidence="9">
    <location>
        <begin position="195"/>
        <end position="206"/>
    </location>
</feature>
<feature type="strand" evidence="9">
    <location>
        <begin position="211"/>
        <end position="222"/>
    </location>
</feature>
<feature type="helix" evidence="9">
    <location>
        <begin position="223"/>
        <end position="225"/>
    </location>
</feature>
<feature type="strand" evidence="9">
    <location>
        <begin position="226"/>
        <end position="228"/>
    </location>
</feature>
<feature type="turn" evidence="6">
    <location>
        <begin position="230"/>
        <end position="232"/>
    </location>
</feature>
<feature type="strand" evidence="9">
    <location>
        <begin position="234"/>
        <end position="241"/>
    </location>
</feature>
<gene>
    <name type="primary">TNFSF9</name>
</gene>
<sequence>MEYASDASLDPEAPWPPAPRARACRVLPWALVAGLLLLLLLAAACAVFLACPWAVSGARASPGSAASPRLREGPELSPDDPAGLLDLRQGMFAQLVAQNVLLIDGPLSWYSDPGLAGVSLTGGLSYKEDTKELVVAKAGVYYVFFQLELRRVVAGEGSGSVSLALHLQPLRSAAGAAALALTVDLPPASSEARNSAFGFQGRLLHLSAGQRLGVHLHTEARARHAWQLTQGATVLGLFRVTPEIPAGLPSPRSE</sequence>
<reference key="1">
    <citation type="journal article" date="1994" name="Eur. J. Immunol.">
        <title>Molecular and biological characterization of human 4-1BB and its ligand.</title>
        <authorList>
            <person name="Alderson M.R."/>
            <person name="Smith C.A."/>
            <person name="Tough T.W."/>
            <person name="Davis-Smith T."/>
            <person name="Armitage R.J."/>
            <person name="Falk B."/>
            <person name="Roux E."/>
            <person name="Baker E."/>
            <person name="Sutherland G.R."/>
            <person name="Din W.S."/>
            <person name="Goodwin R.G."/>
        </authorList>
    </citation>
    <scope>NUCLEOTIDE SEQUENCE [MRNA]</scope>
</reference>
<reference key="2">
    <citation type="journal article" date="2004" name="Genome Res.">
        <title>The status, quality, and expansion of the NIH full-length cDNA project: the Mammalian Gene Collection (MGC).</title>
        <authorList>
            <consortium name="The MGC Project Team"/>
        </authorList>
    </citation>
    <scope>NUCLEOTIDE SEQUENCE [LARGE SCALE MRNA]</scope>
    <source>
        <tissue>Lung</tissue>
    </source>
</reference>
<reference key="3">
    <citation type="journal article" date="2010" name="J. Biol. Chem.">
        <title>The structure of the trimer of human 4-1BB ligand is unique among members of the tumor necrosis factor superfamily.</title>
        <authorList>
            <person name="Won E.Y."/>
            <person name="Cha K."/>
            <person name="Byun J.S."/>
            <person name="Kim D.U."/>
            <person name="Shin S."/>
            <person name="Ahn B."/>
            <person name="Kim Y.H."/>
            <person name="Rice A.J."/>
            <person name="Walz T."/>
            <person name="Kwon B.S."/>
            <person name="Cho H.S."/>
        </authorList>
    </citation>
    <scope>X-RAY CRYSTALLOGRAPHY (2.3 ANGSTROMS) OF 80-246</scope>
    <scope>FUNCTION</scope>
    <scope>SUBUNIT</scope>
</reference>
<organism>
    <name type="scientific">Homo sapiens</name>
    <name type="common">Human</name>
    <dbReference type="NCBI Taxonomy" id="9606"/>
    <lineage>
        <taxon>Eukaryota</taxon>
        <taxon>Metazoa</taxon>
        <taxon>Chordata</taxon>
        <taxon>Craniata</taxon>
        <taxon>Vertebrata</taxon>
        <taxon>Euteleostomi</taxon>
        <taxon>Mammalia</taxon>
        <taxon>Eutheria</taxon>
        <taxon>Euarchontoglires</taxon>
        <taxon>Primates</taxon>
        <taxon>Haplorrhini</taxon>
        <taxon>Catarrhini</taxon>
        <taxon>Hominidae</taxon>
        <taxon>Homo</taxon>
    </lineage>
</organism>